<gene>
    <name type="primary">Exosc8</name>
    <name type="synonym">Rrp43</name>
</gene>
<dbReference type="EMBL" id="AK009584">
    <property type="status" value="NOT_ANNOTATED_CDS"/>
    <property type="molecule type" value="mRNA"/>
</dbReference>
<dbReference type="CCDS" id="CCDS17352.1"/>
<dbReference type="RefSeq" id="NP_081424.3">
    <property type="nucleotide sequence ID" value="NM_027148.3"/>
</dbReference>
<dbReference type="SMR" id="Q9D753"/>
<dbReference type="BioGRID" id="213583">
    <property type="interactions" value="7"/>
</dbReference>
<dbReference type="ComplexPortal" id="CPX-594">
    <property type="entry name" value="Nuclear exosome complex, Dis3-Exosc10 variant"/>
</dbReference>
<dbReference type="ComplexPortal" id="CPX-595">
    <property type="entry name" value="Nucleolar exosome complex, Exosc10 variant"/>
</dbReference>
<dbReference type="ComplexPortal" id="CPX-596">
    <property type="entry name" value="Cytoplasmic exosome complex, Dis3l variant"/>
</dbReference>
<dbReference type="ComplexPortal" id="CPX-598">
    <property type="entry name" value="Exosome complex, Dis3 variant"/>
</dbReference>
<dbReference type="ComplexPortal" id="CPX-601">
    <property type="entry name" value="Cytoplasmic exosome complex, Dis3l-Exosc10 variant"/>
</dbReference>
<dbReference type="FunCoup" id="Q9D753">
    <property type="interactions" value="3327"/>
</dbReference>
<dbReference type="IntAct" id="Q9D753">
    <property type="interactions" value="1"/>
</dbReference>
<dbReference type="MINT" id="Q9D753"/>
<dbReference type="STRING" id="10090.ENSMUSP00000029316"/>
<dbReference type="PhosphoSitePlus" id="Q9D753"/>
<dbReference type="PaxDb" id="10090-ENSMUSP00000029316"/>
<dbReference type="ProteomicsDB" id="267676"/>
<dbReference type="Pumba" id="Q9D753"/>
<dbReference type="Antibodypedia" id="23142">
    <property type="antibodies" value="143 antibodies from 28 providers"/>
</dbReference>
<dbReference type="DNASU" id="69639"/>
<dbReference type="Ensembl" id="ENSMUST00000029316.16">
    <property type="protein sequence ID" value="ENSMUSP00000029316.10"/>
    <property type="gene ID" value="ENSMUSG00000027752.16"/>
</dbReference>
<dbReference type="GeneID" id="69639"/>
<dbReference type="KEGG" id="mmu:69639"/>
<dbReference type="UCSC" id="uc008pfq.2">
    <property type="organism name" value="mouse"/>
</dbReference>
<dbReference type="AGR" id="MGI:1916889"/>
<dbReference type="CTD" id="11340"/>
<dbReference type="MGI" id="MGI:1916889">
    <property type="gene designation" value="Exosc8"/>
</dbReference>
<dbReference type="VEuPathDB" id="HostDB:ENSMUSG00000027752"/>
<dbReference type="eggNOG" id="KOG1613">
    <property type="taxonomic scope" value="Eukaryota"/>
</dbReference>
<dbReference type="GeneTree" id="ENSGT00950000183130"/>
<dbReference type="HOGENOM" id="CLU_038194_3_1_1"/>
<dbReference type="InParanoid" id="Q9D753"/>
<dbReference type="OMA" id="EIKAFWV"/>
<dbReference type="OrthoDB" id="45882at2759"/>
<dbReference type="PhylomeDB" id="Q9D753"/>
<dbReference type="TreeFam" id="TF320415"/>
<dbReference type="Reactome" id="R-MMU-429958">
    <property type="pathway name" value="mRNA decay by 3' to 5' exoribonuclease"/>
</dbReference>
<dbReference type="Reactome" id="R-MMU-450385">
    <property type="pathway name" value="Butyrate Response Factor 1 (BRF1) binds and destabilizes mRNA"/>
</dbReference>
<dbReference type="Reactome" id="R-MMU-450513">
    <property type="pathway name" value="Tristetraprolin (TTP, ZFP36) binds and destabilizes mRNA"/>
</dbReference>
<dbReference type="Reactome" id="R-MMU-450604">
    <property type="pathway name" value="KSRP (KHSRP) binds and destabilizes mRNA"/>
</dbReference>
<dbReference type="Reactome" id="R-MMU-6791226">
    <property type="pathway name" value="Major pathway of rRNA processing in the nucleolus and cytosol"/>
</dbReference>
<dbReference type="BioGRID-ORCS" id="69639">
    <property type="hits" value="27 hits in 79 CRISPR screens"/>
</dbReference>
<dbReference type="ChiTaRS" id="Exosc8">
    <property type="organism name" value="mouse"/>
</dbReference>
<dbReference type="PRO" id="PR:Q9D753"/>
<dbReference type="Proteomes" id="UP000000589">
    <property type="component" value="Chromosome 3"/>
</dbReference>
<dbReference type="RNAct" id="Q9D753">
    <property type="molecule type" value="protein"/>
</dbReference>
<dbReference type="Bgee" id="ENSMUSG00000027752">
    <property type="expression patterns" value="Expressed in yolk sac and 246 other cell types or tissues"/>
</dbReference>
<dbReference type="ExpressionAtlas" id="Q9D753">
    <property type="expression patterns" value="baseline and differential"/>
</dbReference>
<dbReference type="GO" id="GO:0005694">
    <property type="term" value="C:chromosome"/>
    <property type="evidence" value="ECO:0007669"/>
    <property type="project" value="Ensembl"/>
</dbReference>
<dbReference type="GO" id="GO:0000177">
    <property type="term" value="C:cytoplasmic exosome (RNase complex)"/>
    <property type="evidence" value="ECO:0000303"/>
    <property type="project" value="ComplexPortal"/>
</dbReference>
<dbReference type="GO" id="GO:0005829">
    <property type="term" value="C:cytosol"/>
    <property type="evidence" value="ECO:0000266"/>
    <property type="project" value="ComplexPortal"/>
</dbReference>
<dbReference type="GO" id="GO:0000178">
    <property type="term" value="C:exosome (RNase complex)"/>
    <property type="evidence" value="ECO:0000250"/>
    <property type="project" value="UniProtKB"/>
</dbReference>
<dbReference type="GO" id="GO:0001650">
    <property type="term" value="C:fibrillar center"/>
    <property type="evidence" value="ECO:0007669"/>
    <property type="project" value="Ensembl"/>
</dbReference>
<dbReference type="GO" id="GO:0000176">
    <property type="term" value="C:nuclear exosome (RNase complex)"/>
    <property type="evidence" value="ECO:0000303"/>
    <property type="project" value="ComplexPortal"/>
</dbReference>
<dbReference type="GO" id="GO:0101019">
    <property type="term" value="C:nucleolar exosome (RNase complex)"/>
    <property type="evidence" value="ECO:0000303"/>
    <property type="project" value="ComplexPortal"/>
</dbReference>
<dbReference type="GO" id="GO:0005730">
    <property type="term" value="C:nucleolus"/>
    <property type="evidence" value="ECO:0000266"/>
    <property type="project" value="ComplexPortal"/>
</dbReference>
<dbReference type="GO" id="GO:0005654">
    <property type="term" value="C:nucleoplasm"/>
    <property type="evidence" value="ECO:0007669"/>
    <property type="project" value="Ensembl"/>
</dbReference>
<dbReference type="GO" id="GO:0005634">
    <property type="term" value="C:nucleus"/>
    <property type="evidence" value="ECO:0000266"/>
    <property type="project" value="ComplexPortal"/>
</dbReference>
<dbReference type="GO" id="GO:0042802">
    <property type="term" value="F:identical protein binding"/>
    <property type="evidence" value="ECO:0007669"/>
    <property type="project" value="Ensembl"/>
</dbReference>
<dbReference type="GO" id="GO:0035925">
    <property type="term" value="F:mRNA 3'-UTR AU-rich region binding"/>
    <property type="evidence" value="ECO:0007669"/>
    <property type="project" value="Ensembl"/>
</dbReference>
<dbReference type="GO" id="GO:0006401">
    <property type="term" value="P:RNA catabolic process"/>
    <property type="evidence" value="ECO:0000266"/>
    <property type="project" value="ComplexPortal"/>
</dbReference>
<dbReference type="GO" id="GO:0006396">
    <property type="term" value="P:RNA processing"/>
    <property type="evidence" value="ECO:0000266"/>
    <property type="project" value="ComplexPortal"/>
</dbReference>
<dbReference type="GO" id="GO:0006364">
    <property type="term" value="P:rRNA processing"/>
    <property type="evidence" value="ECO:0007669"/>
    <property type="project" value="UniProtKB-KW"/>
</dbReference>
<dbReference type="CDD" id="cd11369">
    <property type="entry name" value="RNase_PH_RRP43"/>
    <property type="match status" value="1"/>
</dbReference>
<dbReference type="FunFam" id="3.30.230.70:FF:000011">
    <property type="entry name" value="exosome complex component RRP43"/>
    <property type="match status" value="1"/>
</dbReference>
<dbReference type="Gene3D" id="3.30.230.70">
    <property type="entry name" value="GHMP Kinase, N-terminal domain"/>
    <property type="match status" value="1"/>
</dbReference>
<dbReference type="InterPro" id="IPR001247">
    <property type="entry name" value="ExoRNase_PH_dom1"/>
</dbReference>
<dbReference type="InterPro" id="IPR015847">
    <property type="entry name" value="ExoRNase_PH_dom2"/>
</dbReference>
<dbReference type="InterPro" id="IPR036345">
    <property type="entry name" value="ExoRNase_PH_dom2_sf"/>
</dbReference>
<dbReference type="InterPro" id="IPR050590">
    <property type="entry name" value="Exosome_comp_Rrp42_subfam"/>
</dbReference>
<dbReference type="InterPro" id="IPR027408">
    <property type="entry name" value="PNPase/RNase_PH_dom_sf"/>
</dbReference>
<dbReference type="InterPro" id="IPR020568">
    <property type="entry name" value="Ribosomal_Su5_D2-typ_SF"/>
</dbReference>
<dbReference type="InterPro" id="IPR033196">
    <property type="entry name" value="Rrp43"/>
</dbReference>
<dbReference type="PANTHER" id="PTHR11097:SF9">
    <property type="entry name" value="EXOSOME COMPLEX COMPONENT RRP43"/>
    <property type="match status" value="1"/>
</dbReference>
<dbReference type="PANTHER" id="PTHR11097">
    <property type="entry name" value="EXOSOME COMPLEX EXONUCLEASE RIBOSOMAL RNA PROCESSING PROTEIN"/>
    <property type="match status" value="1"/>
</dbReference>
<dbReference type="Pfam" id="PF01138">
    <property type="entry name" value="RNase_PH"/>
    <property type="match status" value="1"/>
</dbReference>
<dbReference type="Pfam" id="PF03725">
    <property type="entry name" value="RNase_PH_C"/>
    <property type="match status" value="1"/>
</dbReference>
<dbReference type="SUPFAM" id="SSF55666">
    <property type="entry name" value="Ribonuclease PH domain 2-like"/>
    <property type="match status" value="1"/>
</dbReference>
<dbReference type="SUPFAM" id="SSF54211">
    <property type="entry name" value="Ribosomal protein S5 domain 2-like"/>
    <property type="match status" value="1"/>
</dbReference>
<sequence length="276" mass="29949">MAAGFKTVEPLEYYRRFLKENCRPDGRELGEFRATTVNIGSISTADGSALVKLGNTTVICGVKAEFAAPPVDAPDRGYVVPNVDLPPLCSSRFRTGPPGEEAQVTSQFIADVVDNSQVIKKEDLCISPGKLAWVLYCDLICLDYDGNILDACTFALLAALKNVQLPEVTINEETALAEVNLKKKSYLNVRTNPVATSFAVFDDTLLIVDPTGEEEHLSTGTLTVVTDEDGKLCCLHKPGGSGLTGAKLQDCMSRAVTRHKEVSKLLDEVIQSMRHK</sequence>
<organism>
    <name type="scientific">Mus musculus</name>
    <name type="common">Mouse</name>
    <dbReference type="NCBI Taxonomy" id="10090"/>
    <lineage>
        <taxon>Eukaryota</taxon>
        <taxon>Metazoa</taxon>
        <taxon>Chordata</taxon>
        <taxon>Craniata</taxon>
        <taxon>Vertebrata</taxon>
        <taxon>Euteleostomi</taxon>
        <taxon>Mammalia</taxon>
        <taxon>Eutheria</taxon>
        <taxon>Euarchontoglires</taxon>
        <taxon>Glires</taxon>
        <taxon>Rodentia</taxon>
        <taxon>Myomorpha</taxon>
        <taxon>Muroidea</taxon>
        <taxon>Muridae</taxon>
        <taxon>Murinae</taxon>
        <taxon>Mus</taxon>
        <taxon>Mus</taxon>
    </lineage>
</organism>
<feature type="initiator methionine" description="Removed" evidence="1">
    <location>
        <position position="1"/>
    </location>
</feature>
<feature type="chain" id="PRO_0000139968" description="Exosome complex component RRP43">
    <location>
        <begin position="2"/>
        <end position="276"/>
    </location>
</feature>
<feature type="modified residue" description="N-acetylalanine" evidence="1">
    <location>
        <position position="2"/>
    </location>
</feature>
<keyword id="KW-0007">Acetylation</keyword>
<keyword id="KW-0963">Cytoplasm</keyword>
<keyword id="KW-0271">Exosome</keyword>
<keyword id="KW-0539">Nucleus</keyword>
<keyword id="KW-1185">Reference proteome</keyword>
<keyword id="KW-0694">RNA-binding</keyword>
<keyword id="KW-0698">rRNA processing</keyword>
<comment type="function">
    <text evidence="1">Non-catalytic component of the RNA exosome complex which has 3'-&gt;5' exoribonuclease activity and participates in a multitude of cellular RNA processing and degradation events. In the nucleus, the RNA exosome complex is involved in proper maturation of stable RNA species such as rRNA, snRNA and snoRNA, in the elimination of RNA processing by-products and non-coding 'pervasive' transcripts, such as antisense RNA species and promoter-upstream transcripts (PROMPTs), and of mRNAs with processing defects, thereby limiting or excluding their export to the cytoplasm. The RNA exosome may be involved in Ig class switch recombination (CSR) and/or Ig variable region somatic hypermutation (SHM) by targeting AICDA deamination activity to transcribed dsDNA substrates. In the cytoplasm, the RNA exosome complex is involved in general mRNA turnover and specifically degrades inherently unstable mRNAs containing AU-rich elements (AREs) within their 3' untranslated regions, and in RNA surveillance pathways, preventing translation of aberrant mRNAs. It seems to be involved in degradation of histone mRNA. The catalytic inactive RNA exosome core complex of 9 subunits (Exo-9) is proposed to play a pivotal role in the binding and presentation of RNA for ribonucleolysis, and to serve as a scaffold for the association with catalytic subunits and accessory proteins or complexes. EXOSC8 binds to ARE-containing RNAs (By similarity).</text>
</comment>
<comment type="subunit">
    <text evidence="1">Component of the RNA exosome core complex (Exo-9), composed of EXOSC1, EXOSC2, EXOSC3, EXOSC4, EXOSC5, EXOSC6, EXOSC7, EXOSC8 and EXOSC9; within the complex interacts with EXOSC5 and EXOSC6 (By similarity). The catalytically inactive RNA exosome core complex (Exo-9) associates with the catalytic subunit EXOSC10/RRP6 (By similarity). Exo-9 may associate with DIS3 to form the nucleolar exosome complex, or DIS3L to form the cytoplasmic exosome complex (By similarity). Exo-9 is formed by a hexameric base ring consisting of the heterodimers EXOSC4-EXOSC9, EXOSC5-EXOSC8 and EXOSC6-EXOSC7, and a cap ring consisting of EXOSC1, EXOSC2 and EXOSC3 (By similarity). The RNA exosome complex associates with cofactors C1D/RRP47, MPHOSPH6/MPP6 and MTREX/MTR4 (By similarity).</text>
</comment>
<comment type="interaction">
    <interactant intactId="EBI-8387079">
        <id>Q9D753</id>
    </interactant>
    <interactant intactId="EBI-6272972">
        <id>Q8K4E0</id>
        <label>Alms1</label>
    </interactant>
    <organismsDiffer>false</organismsDiffer>
    <experiments>3</experiments>
</comment>
<comment type="subcellular location">
    <subcellularLocation>
        <location evidence="1">Cytoplasm</location>
    </subcellularLocation>
    <subcellularLocation>
        <location evidence="1">Nucleus</location>
        <location evidence="1">Nucleolus</location>
    </subcellularLocation>
    <subcellularLocation>
        <location evidence="1">Nucleus</location>
    </subcellularLocation>
</comment>
<comment type="similarity">
    <text evidence="2">Belongs to the RNase PH family.</text>
</comment>
<name>EXOS8_MOUSE</name>
<accession>Q9D753</accession>
<reference key="1">
    <citation type="journal article" date="2005" name="Science">
        <title>The transcriptional landscape of the mammalian genome.</title>
        <authorList>
            <person name="Carninci P."/>
            <person name="Kasukawa T."/>
            <person name="Katayama S."/>
            <person name="Gough J."/>
            <person name="Frith M.C."/>
            <person name="Maeda N."/>
            <person name="Oyama R."/>
            <person name="Ravasi T."/>
            <person name="Lenhard B."/>
            <person name="Wells C."/>
            <person name="Kodzius R."/>
            <person name="Shimokawa K."/>
            <person name="Bajic V.B."/>
            <person name="Brenner S.E."/>
            <person name="Batalov S."/>
            <person name="Forrest A.R."/>
            <person name="Zavolan M."/>
            <person name="Davis M.J."/>
            <person name="Wilming L.G."/>
            <person name="Aidinis V."/>
            <person name="Allen J.E."/>
            <person name="Ambesi-Impiombato A."/>
            <person name="Apweiler R."/>
            <person name="Aturaliya R.N."/>
            <person name="Bailey T.L."/>
            <person name="Bansal M."/>
            <person name="Baxter L."/>
            <person name="Beisel K.W."/>
            <person name="Bersano T."/>
            <person name="Bono H."/>
            <person name="Chalk A.M."/>
            <person name="Chiu K.P."/>
            <person name="Choudhary V."/>
            <person name="Christoffels A."/>
            <person name="Clutterbuck D.R."/>
            <person name="Crowe M.L."/>
            <person name="Dalla E."/>
            <person name="Dalrymple B.P."/>
            <person name="de Bono B."/>
            <person name="Della Gatta G."/>
            <person name="di Bernardo D."/>
            <person name="Down T."/>
            <person name="Engstrom P."/>
            <person name="Fagiolini M."/>
            <person name="Faulkner G."/>
            <person name="Fletcher C.F."/>
            <person name="Fukushima T."/>
            <person name="Furuno M."/>
            <person name="Futaki S."/>
            <person name="Gariboldi M."/>
            <person name="Georgii-Hemming P."/>
            <person name="Gingeras T.R."/>
            <person name="Gojobori T."/>
            <person name="Green R.E."/>
            <person name="Gustincich S."/>
            <person name="Harbers M."/>
            <person name="Hayashi Y."/>
            <person name="Hensch T.K."/>
            <person name="Hirokawa N."/>
            <person name="Hill D."/>
            <person name="Huminiecki L."/>
            <person name="Iacono M."/>
            <person name="Ikeo K."/>
            <person name="Iwama A."/>
            <person name="Ishikawa T."/>
            <person name="Jakt M."/>
            <person name="Kanapin A."/>
            <person name="Katoh M."/>
            <person name="Kawasawa Y."/>
            <person name="Kelso J."/>
            <person name="Kitamura H."/>
            <person name="Kitano H."/>
            <person name="Kollias G."/>
            <person name="Krishnan S.P."/>
            <person name="Kruger A."/>
            <person name="Kummerfeld S.K."/>
            <person name="Kurochkin I.V."/>
            <person name="Lareau L.F."/>
            <person name="Lazarevic D."/>
            <person name="Lipovich L."/>
            <person name="Liu J."/>
            <person name="Liuni S."/>
            <person name="McWilliam S."/>
            <person name="Madan Babu M."/>
            <person name="Madera M."/>
            <person name="Marchionni L."/>
            <person name="Matsuda H."/>
            <person name="Matsuzawa S."/>
            <person name="Miki H."/>
            <person name="Mignone F."/>
            <person name="Miyake S."/>
            <person name="Morris K."/>
            <person name="Mottagui-Tabar S."/>
            <person name="Mulder N."/>
            <person name="Nakano N."/>
            <person name="Nakauchi H."/>
            <person name="Ng P."/>
            <person name="Nilsson R."/>
            <person name="Nishiguchi S."/>
            <person name="Nishikawa S."/>
            <person name="Nori F."/>
            <person name="Ohara O."/>
            <person name="Okazaki Y."/>
            <person name="Orlando V."/>
            <person name="Pang K.C."/>
            <person name="Pavan W.J."/>
            <person name="Pavesi G."/>
            <person name="Pesole G."/>
            <person name="Petrovsky N."/>
            <person name="Piazza S."/>
            <person name="Reed J."/>
            <person name="Reid J.F."/>
            <person name="Ring B.Z."/>
            <person name="Ringwald M."/>
            <person name="Rost B."/>
            <person name="Ruan Y."/>
            <person name="Salzberg S.L."/>
            <person name="Sandelin A."/>
            <person name="Schneider C."/>
            <person name="Schoenbach C."/>
            <person name="Sekiguchi K."/>
            <person name="Semple C.A."/>
            <person name="Seno S."/>
            <person name="Sessa L."/>
            <person name="Sheng Y."/>
            <person name="Shibata Y."/>
            <person name="Shimada H."/>
            <person name="Shimada K."/>
            <person name="Silva D."/>
            <person name="Sinclair B."/>
            <person name="Sperling S."/>
            <person name="Stupka E."/>
            <person name="Sugiura K."/>
            <person name="Sultana R."/>
            <person name="Takenaka Y."/>
            <person name="Taki K."/>
            <person name="Tammoja K."/>
            <person name="Tan S.L."/>
            <person name="Tang S."/>
            <person name="Taylor M.S."/>
            <person name="Tegner J."/>
            <person name="Teichmann S.A."/>
            <person name="Ueda H.R."/>
            <person name="van Nimwegen E."/>
            <person name="Verardo R."/>
            <person name="Wei C.L."/>
            <person name="Yagi K."/>
            <person name="Yamanishi H."/>
            <person name="Zabarovsky E."/>
            <person name="Zhu S."/>
            <person name="Zimmer A."/>
            <person name="Hide W."/>
            <person name="Bult C."/>
            <person name="Grimmond S.M."/>
            <person name="Teasdale R.D."/>
            <person name="Liu E.T."/>
            <person name="Brusic V."/>
            <person name="Quackenbush J."/>
            <person name="Wahlestedt C."/>
            <person name="Mattick J.S."/>
            <person name="Hume D.A."/>
            <person name="Kai C."/>
            <person name="Sasaki D."/>
            <person name="Tomaru Y."/>
            <person name="Fukuda S."/>
            <person name="Kanamori-Katayama M."/>
            <person name="Suzuki M."/>
            <person name="Aoki J."/>
            <person name="Arakawa T."/>
            <person name="Iida J."/>
            <person name="Imamura K."/>
            <person name="Itoh M."/>
            <person name="Kato T."/>
            <person name="Kawaji H."/>
            <person name="Kawagashira N."/>
            <person name="Kawashima T."/>
            <person name="Kojima M."/>
            <person name="Kondo S."/>
            <person name="Konno H."/>
            <person name="Nakano K."/>
            <person name="Ninomiya N."/>
            <person name="Nishio T."/>
            <person name="Okada M."/>
            <person name="Plessy C."/>
            <person name="Shibata K."/>
            <person name="Shiraki T."/>
            <person name="Suzuki S."/>
            <person name="Tagami M."/>
            <person name="Waki K."/>
            <person name="Watahiki A."/>
            <person name="Okamura-Oho Y."/>
            <person name="Suzuki H."/>
            <person name="Kawai J."/>
            <person name="Hayashizaki Y."/>
        </authorList>
    </citation>
    <scope>NUCLEOTIDE SEQUENCE [LARGE SCALE MRNA]</scope>
    <source>
        <strain>C57BL/6J</strain>
        <tissue>Tongue</tissue>
    </source>
</reference>
<reference key="2">
    <citation type="journal article" date="2010" name="Cell">
        <title>A tissue-specific atlas of mouse protein phosphorylation and expression.</title>
        <authorList>
            <person name="Huttlin E.L."/>
            <person name="Jedrychowski M.P."/>
            <person name="Elias J.E."/>
            <person name="Goswami T."/>
            <person name="Rad R."/>
            <person name="Beausoleil S.A."/>
            <person name="Villen J."/>
            <person name="Haas W."/>
            <person name="Sowa M.E."/>
            <person name="Gygi S.P."/>
        </authorList>
    </citation>
    <scope>IDENTIFICATION BY MASS SPECTROMETRY [LARGE SCALE ANALYSIS]</scope>
    <source>
        <tissue>Kidney</tissue>
        <tissue>Liver</tissue>
        <tissue>Spleen</tissue>
        <tissue>Testis</tissue>
    </source>
</reference>
<proteinExistence type="evidence at protein level"/>
<evidence type="ECO:0000250" key="1">
    <source>
        <dbReference type="UniProtKB" id="Q96B26"/>
    </source>
</evidence>
<evidence type="ECO:0000305" key="2"/>
<protein>
    <recommendedName>
        <fullName>Exosome complex component RRP43</fullName>
    </recommendedName>
    <alternativeName>
        <fullName>Exosome component 8</fullName>
    </alternativeName>
    <alternativeName>
        <fullName>Ribosomal RNA-processing protein 43</fullName>
    </alternativeName>
</protein>